<protein>
    <recommendedName>
        <fullName evidence="1">Sec-independent protein translocase protein TatA</fullName>
    </recommendedName>
</protein>
<evidence type="ECO:0000255" key="1">
    <source>
        <dbReference type="HAMAP-Rule" id="MF_00236"/>
    </source>
</evidence>
<evidence type="ECO:0000256" key="2">
    <source>
        <dbReference type="SAM" id="MobiDB-lite"/>
    </source>
</evidence>
<dbReference type="EMBL" id="CP000758">
    <property type="protein sequence ID" value="ABS15059.1"/>
    <property type="molecule type" value="Genomic_DNA"/>
</dbReference>
<dbReference type="RefSeq" id="WP_010661242.1">
    <property type="nucleotide sequence ID" value="NC_009667.1"/>
</dbReference>
<dbReference type="SMR" id="A6X1F5"/>
<dbReference type="STRING" id="439375.Oant_2345"/>
<dbReference type="KEGG" id="oan:Oant_2345"/>
<dbReference type="eggNOG" id="COG1826">
    <property type="taxonomic scope" value="Bacteria"/>
</dbReference>
<dbReference type="HOGENOM" id="CLU_086034_5_0_5"/>
<dbReference type="Proteomes" id="UP000002301">
    <property type="component" value="Chromosome 1"/>
</dbReference>
<dbReference type="GO" id="GO:0033281">
    <property type="term" value="C:TAT protein transport complex"/>
    <property type="evidence" value="ECO:0007669"/>
    <property type="project" value="UniProtKB-UniRule"/>
</dbReference>
<dbReference type="GO" id="GO:0008320">
    <property type="term" value="F:protein transmembrane transporter activity"/>
    <property type="evidence" value="ECO:0007669"/>
    <property type="project" value="UniProtKB-UniRule"/>
</dbReference>
<dbReference type="GO" id="GO:0043953">
    <property type="term" value="P:protein transport by the Tat complex"/>
    <property type="evidence" value="ECO:0007669"/>
    <property type="project" value="UniProtKB-UniRule"/>
</dbReference>
<dbReference type="Gene3D" id="1.20.5.3310">
    <property type="match status" value="1"/>
</dbReference>
<dbReference type="HAMAP" id="MF_00236">
    <property type="entry name" value="TatA_E"/>
    <property type="match status" value="1"/>
</dbReference>
<dbReference type="InterPro" id="IPR003369">
    <property type="entry name" value="TatA/B/E"/>
</dbReference>
<dbReference type="InterPro" id="IPR006312">
    <property type="entry name" value="TatA/E"/>
</dbReference>
<dbReference type="NCBIfam" id="NF001940">
    <property type="entry name" value="PRK00720.1"/>
    <property type="match status" value="1"/>
</dbReference>
<dbReference type="NCBIfam" id="TIGR01411">
    <property type="entry name" value="tatAE"/>
    <property type="match status" value="1"/>
</dbReference>
<dbReference type="PANTHER" id="PTHR42982">
    <property type="entry name" value="SEC-INDEPENDENT PROTEIN TRANSLOCASE PROTEIN TATA"/>
    <property type="match status" value="1"/>
</dbReference>
<dbReference type="PANTHER" id="PTHR42982:SF1">
    <property type="entry name" value="SEC-INDEPENDENT PROTEIN TRANSLOCASE PROTEIN TATA"/>
    <property type="match status" value="1"/>
</dbReference>
<dbReference type="Pfam" id="PF02416">
    <property type="entry name" value="TatA_B_E"/>
    <property type="match status" value="1"/>
</dbReference>
<keyword id="KW-0997">Cell inner membrane</keyword>
<keyword id="KW-1003">Cell membrane</keyword>
<keyword id="KW-0472">Membrane</keyword>
<keyword id="KW-0653">Protein transport</keyword>
<keyword id="KW-1185">Reference proteome</keyword>
<keyword id="KW-0811">Translocation</keyword>
<keyword id="KW-0812">Transmembrane</keyword>
<keyword id="KW-1133">Transmembrane helix</keyword>
<keyword id="KW-0813">Transport</keyword>
<comment type="function">
    <text evidence="1">Part of the twin-arginine translocation (Tat) system that transports large folded proteins containing a characteristic twin-arginine motif in their signal peptide across membranes. TatA could form the protein-conducting channel of the Tat system.</text>
</comment>
<comment type="subunit">
    <text evidence="1">The Tat system comprises two distinct complexes: a TatABC complex, containing multiple copies of TatA, TatB and TatC subunits, and a separate TatA complex, containing only TatA subunits. Substrates initially bind to the TatABC complex, which probably triggers association of the separate TatA complex to form the active translocon.</text>
</comment>
<comment type="subcellular location">
    <subcellularLocation>
        <location evidence="1">Cell inner membrane</location>
        <topology evidence="1">Single-pass membrane protein</topology>
    </subcellularLocation>
</comment>
<comment type="similarity">
    <text evidence="1">Belongs to the TatA/E family.</text>
</comment>
<accession>A6X1F5</accession>
<feature type="chain" id="PRO_1000044415" description="Sec-independent protein translocase protein TatA">
    <location>
        <begin position="1"/>
        <end position="76"/>
    </location>
</feature>
<feature type="transmembrane region" description="Helical" evidence="1">
    <location>
        <begin position="1"/>
        <end position="21"/>
    </location>
</feature>
<feature type="region of interest" description="Disordered" evidence="2">
    <location>
        <begin position="43"/>
        <end position="76"/>
    </location>
</feature>
<feature type="compositionally biased region" description="Basic and acidic residues" evidence="2">
    <location>
        <begin position="50"/>
        <end position="76"/>
    </location>
</feature>
<sequence length="76" mass="8367">MGSFSIWHWLIVLAVVLLLFGRGKIPELMGDVAKGIKNFKQGMSDEDAKDDARDSGRTIDAKADETVNDVKKTTKS</sequence>
<proteinExistence type="inferred from homology"/>
<name>TATA_BRUA4</name>
<reference key="1">
    <citation type="journal article" date="2011" name="J. Bacteriol.">
        <title>Genome of Ochrobactrum anthropi ATCC 49188 T, a versatile opportunistic pathogen and symbiont of several eukaryotic hosts.</title>
        <authorList>
            <person name="Chain P.S."/>
            <person name="Lang D.M."/>
            <person name="Comerci D.J."/>
            <person name="Malfatti S.A."/>
            <person name="Vergez L.M."/>
            <person name="Shin M."/>
            <person name="Ugalde R.A."/>
            <person name="Garcia E."/>
            <person name="Tolmasky M.E."/>
        </authorList>
    </citation>
    <scope>NUCLEOTIDE SEQUENCE [LARGE SCALE GENOMIC DNA]</scope>
    <source>
        <strain>ATCC 49188 / DSM 6882 / CCUG 24695 / JCM 21032 / LMG 3331 / NBRC 15819 / NCTC 12168 / Alc 37</strain>
    </source>
</reference>
<organism>
    <name type="scientific">Brucella anthropi (strain ATCC 49188 / DSM 6882 / CCUG 24695 / JCM 21032 / LMG 3331 / NBRC 15819 / NCTC 12168 / Alc 37)</name>
    <name type="common">Ochrobactrum anthropi</name>
    <dbReference type="NCBI Taxonomy" id="439375"/>
    <lineage>
        <taxon>Bacteria</taxon>
        <taxon>Pseudomonadati</taxon>
        <taxon>Pseudomonadota</taxon>
        <taxon>Alphaproteobacteria</taxon>
        <taxon>Hyphomicrobiales</taxon>
        <taxon>Brucellaceae</taxon>
        <taxon>Brucella/Ochrobactrum group</taxon>
        <taxon>Brucella</taxon>
    </lineage>
</organism>
<gene>
    <name evidence="1" type="primary">tatA</name>
    <name type="ordered locus">Oant_2345</name>
</gene>